<keyword id="KW-0963">Cytoplasm</keyword>
<keyword id="KW-0342">GTP-binding</keyword>
<keyword id="KW-0396">Initiation factor</keyword>
<keyword id="KW-0547">Nucleotide-binding</keyword>
<keyword id="KW-0648">Protein biosynthesis</keyword>
<keyword id="KW-1185">Reference proteome</keyword>
<sequence length="1114" mass="122173">MTISDKIRIYELSRDLNLENKDILDAAQKLSISVKSHSSSISAEEAKKIKNLINKKNSDKKILSINKPSIKKDNFKQNKSPSISSKKETPLKDNSNKKPLLIKPLNKPESVKIISNQLQNSNKPNIVNTSQSRANLTNTNINSKTSQNLNQDKKTFENNITPPIKSPAKPPIQLIAKPKNINNNVKSNESSQNISSAGDNRRLSNKPDQNTNKPKTKNYDSKIKTPELVGAPIRREDPKINPNKQNNKQNIAFKQTGSNRIGSPNRPGMPNNRPGLRNKPSDQGRPGSFNRQGNPNRPGMPNNRPGLRNKPSDQGRHGSFNRQGNPNRPGMPNNRPGSKFNGQNSSGIRKPVSPNELLQLQKNNNSEKDNKDKNNNAKQNINGPNQKAKAPNMRPNATPSSKKPPHRAFSNSSKKPGKTDWDDSAKLEALRSKNPQKQRQKVHIIGENDDSLTSETSGYSGEKISILSASLARPKKEKSEETKSQKSIKQFKKKKKETTRQRQKRRAMELKAAKEAKQVRPEMIIVPEDNLTVQELADKLSLESSEIIKSLFFKGITATVTQSLDLATIETVAEEFGVPVLQDDIQEAAEKTVDMIESDDIDNLIRRPPVITVMGHVDHGKTSLLDSIRESRVASGEAGGITQHIGAYQVEFEHESQKKKLTFLDTPGHEAFTAMRARGTKVTDVAVLVVAADDGCRPQTLEAISHARAAKVPIVVAINKIDKEGASPDRVKQELSEKDLIAEDWGGDTVMVPVSAIKKQNIDKLLEMILLVSEVEDLQANPDRFAKGTVIEAHLDKAKGPVATLLVQNGTLKSGDVLAAGSVLGKIRAMVDEHGNRIKEAGPSFPVEALGFSEVPTAGDEFEVYPDEKAGRAIVGERATDARATKLAQQMASRRVSLSSLSTQANDGELKELNLILKADVQGSVEAILGSLEQLPKNEVQVRVLFSAPGEITETDIDLAAASGSVIIGFNTSLASGAKRAADANDVDIREYEVIYKLLEDIQLAMEGLLEPDLVEESLGQAEVRATFSVGKGAIAGCYIQTGKLQRNCSLRVIRSEKVIFEGNLDSLKRAKDDVKEVNTGFECGVGCDKFSSWIEGDVIEAFKFVTKKRTLSQ</sequence>
<proteinExistence type="inferred from homology"/>
<organism>
    <name type="scientific">Prochlorococcus marinus (strain MIT 9301)</name>
    <dbReference type="NCBI Taxonomy" id="167546"/>
    <lineage>
        <taxon>Bacteria</taxon>
        <taxon>Bacillati</taxon>
        <taxon>Cyanobacteriota</taxon>
        <taxon>Cyanophyceae</taxon>
        <taxon>Synechococcales</taxon>
        <taxon>Prochlorococcaceae</taxon>
        <taxon>Prochlorococcus</taxon>
    </lineage>
</organism>
<feature type="chain" id="PRO_1000008296" description="Translation initiation factor IF-2">
    <location>
        <begin position="1"/>
        <end position="1114"/>
    </location>
</feature>
<feature type="domain" description="tr-type G">
    <location>
        <begin position="606"/>
        <end position="778"/>
    </location>
</feature>
<feature type="region of interest" description="Disordered" evidence="3">
    <location>
        <begin position="69"/>
        <end position="102"/>
    </location>
</feature>
<feature type="region of interest" description="Disordered" evidence="3">
    <location>
        <begin position="181"/>
        <end position="507"/>
    </location>
</feature>
<feature type="region of interest" description="G1" evidence="1">
    <location>
        <begin position="615"/>
        <end position="622"/>
    </location>
</feature>
<feature type="region of interest" description="G2" evidence="1">
    <location>
        <begin position="640"/>
        <end position="644"/>
    </location>
</feature>
<feature type="region of interest" description="G3" evidence="1">
    <location>
        <begin position="665"/>
        <end position="668"/>
    </location>
</feature>
<feature type="region of interest" description="G4" evidence="1">
    <location>
        <begin position="719"/>
        <end position="722"/>
    </location>
</feature>
<feature type="region of interest" description="G5" evidence="1">
    <location>
        <begin position="755"/>
        <end position="757"/>
    </location>
</feature>
<feature type="compositionally biased region" description="Basic and acidic residues" evidence="3">
    <location>
        <begin position="85"/>
        <end position="96"/>
    </location>
</feature>
<feature type="compositionally biased region" description="Polar residues" evidence="3">
    <location>
        <begin position="181"/>
        <end position="198"/>
    </location>
</feature>
<feature type="compositionally biased region" description="Low complexity" evidence="3">
    <location>
        <begin position="240"/>
        <end position="251"/>
    </location>
</feature>
<feature type="compositionally biased region" description="Polar residues" evidence="3">
    <location>
        <begin position="252"/>
        <end position="261"/>
    </location>
</feature>
<feature type="compositionally biased region" description="Low complexity" evidence="3">
    <location>
        <begin position="262"/>
        <end position="278"/>
    </location>
</feature>
<feature type="compositionally biased region" description="Low complexity" evidence="3">
    <location>
        <begin position="290"/>
        <end position="309"/>
    </location>
</feature>
<feature type="compositionally biased region" description="Low complexity" evidence="3">
    <location>
        <begin position="321"/>
        <end position="337"/>
    </location>
</feature>
<feature type="compositionally biased region" description="Basic and acidic residues" evidence="3">
    <location>
        <begin position="365"/>
        <end position="375"/>
    </location>
</feature>
<feature type="compositionally biased region" description="Low complexity" evidence="3">
    <location>
        <begin position="376"/>
        <end position="385"/>
    </location>
</feature>
<feature type="compositionally biased region" description="Basic and acidic residues" evidence="3">
    <location>
        <begin position="417"/>
        <end position="431"/>
    </location>
</feature>
<feature type="compositionally biased region" description="Basic residues" evidence="3">
    <location>
        <begin position="489"/>
        <end position="505"/>
    </location>
</feature>
<feature type="binding site" evidence="2">
    <location>
        <begin position="615"/>
        <end position="622"/>
    </location>
    <ligand>
        <name>GTP</name>
        <dbReference type="ChEBI" id="CHEBI:37565"/>
    </ligand>
</feature>
<feature type="binding site" evidence="2">
    <location>
        <begin position="665"/>
        <end position="669"/>
    </location>
    <ligand>
        <name>GTP</name>
        <dbReference type="ChEBI" id="CHEBI:37565"/>
    </ligand>
</feature>
<feature type="binding site" evidence="2">
    <location>
        <begin position="719"/>
        <end position="722"/>
    </location>
    <ligand>
        <name>GTP</name>
        <dbReference type="ChEBI" id="CHEBI:37565"/>
    </ligand>
</feature>
<gene>
    <name evidence="2" type="primary">infB</name>
    <name type="ordered locus">P9301_16851</name>
</gene>
<dbReference type="EMBL" id="CP000576">
    <property type="protein sequence ID" value="ABO18308.1"/>
    <property type="molecule type" value="Genomic_DNA"/>
</dbReference>
<dbReference type="RefSeq" id="WP_011863605.1">
    <property type="nucleotide sequence ID" value="NC_009091.1"/>
</dbReference>
<dbReference type="SMR" id="A3PEY3"/>
<dbReference type="STRING" id="167546.P9301_16851"/>
<dbReference type="KEGG" id="pmg:P9301_16851"/>
<dbReference type="eggNOG" id="COG0532">
    <property type="taxonomic scope" value="Bacteria"/>
</dbReference>
<dbReference type="HOGENOM" id="CLU_006301_5_1_3"/>
<dbReference type="OrthoDB" id="9811804at2"/>
<dbReference type="Proteomes" id="UP000001430">
    <property type="component" value="Chromosome"/>
</dbReference>
<dbReference type="GO" id="GO:0005829">
    <property type="term" value="C:cytosol"/>
    <property type="evidence" value="ECO:0007669"/>
    <property type="project" value="TreeGrafter"/>
</dbReference>
<dbReference type="GO" id="GO:0005525">
    <property type="term" value="F:GTP binding"/>
    <property type="evidence" value="ECO:0007669"/>
    <property type="project" value="UniProtKB-KW"/>
</dbReference>
<dbReference type="GO" id="GO:0003924">
    <property type="term" value="F:GTPase activity"/>
    <property type="evidence" value="ECO:0007669"/>
    <property type="project" value="UniProtKB-UniRule"/>
</dbReference>
<dbReference type="GO" id="GO:0003743">
    <property type="term" value="F:translation initiation factor activity"/>
    <property type="evidence" value="ECO:0007669"/>
    <property type="project" value="UniProtKB-UniRule"/>
</dbReference>
<dbReference type="CDD" id="cd01887">
    <property type="entry name" value="IF2_eIF5B"/>
    <property type="match status" value="1"/>
</dbReference>
<dbReference type="CDD" id="cd03702">
    <property type="entry name" value="IF2_mtIF2_II"/>
    <property type="match status" value="1"/>
</dbReference>
<dbReference type="CDD" id="cd03692">
    <property type="entry name" value="mtIF2_IVc"/>
    <property type="match status" value="1"/>
</dbReference>
<dbReference type="FunFam" id="2.40.30.10:FF:000007">
    <property type="entry name" value="Translation initiation factor IF-2"/>
    <property type="match status" value="1"/>
</dbReference>
<dbReference type="FunFam" id="2.40.30.10:FF:000008">
    <property type="entry name" value="Translation initiation factor IF-2"/>
    <property type="match status" value="1"/>
</dbReference>
<dbReference type="FunFam" id="3.40.50.10050:FF:000001">
    <property type="entry name" value="Translation initiation factor IF-2"/>
    <property type="match status" value="1"/>
</dbReference>
<dbReference type="FunFam" id="3.40.50.300:FF:000019">
    <property type="entry name" value="Translation initiation factor IF-2"/>
    <property type="match status" value="1"/>
</dbReference>
<dbReference type="Gene3D" id="1.10.10.2480">
    <property type="match status" value="1"/>
</dbReference>
<dbReference type="Gene3D" id="3.40.50.300">
    <property type="entry name" value="P-loop containing nucleotide triphosphate hydrolases"/>
    <property type="match status" value="1"/>
</dbReference>
<dbReference type="Gene3D" id="2.40.30.10">
    <property type="entry name" value="Translation factors"/>
    <property type="match status" value="2"/>
</dbReference>
<dbReference type="Gene3D" id="3.40.50.10050">
    <property type="entry name" value="Translation initiation factor IF- 2, domain 3"/>
    <property type="match status" value="1"/>
</dbReference>
<dbReference type="HAMAP" id="MF_00100_B">
    <property type="entry name" value="IF_2_B"/>
    <property type="match status" value="1"/>
</dbReference>
<dbReference type="InterPro" id="IPR053905">
    <property type="entry name" value="EF-G-like_DII"/>
</dbReference>
<dbReference type="InterPro" id="IPR044145">
    <property type="entry name" value="IF2_II"/>
</dbReference>
<dbReference type="InterPro" id="IPR006847">
    <property type="entry name" value="IF2_N"/>
</dbReference>
<dbReference type="InterPro" id="IPR027417">
    <property type="entry name" value="P-loop_NTPase"/>
</dbReference>
<dbReference type="InterPro" id="IPR005225">
    <property type="entry name" value="Small_GTP-bd"/>
</dbReference>
<dbReference type="InterPro" id="IPR000795">
    <property type="entry name" value="T_Tr_GTP-bd_dom"/>
</dbReference>
<dbReference type="InterPro" id="IPR000178">
    <property type="entry name" value="TF_IF2_bacterial-like"/>
</dbReference>
<dbReference type="InterPro" id="IPR015760">
    <property type="entry name" value="TIF_IF2"/>
</dbReference>
<dbReference type="InterPro" id="IPR023115">
    <property type="entry name" value="TIF_IF2_dom3"/>
</dbReference>
<dbReference type="InterPro" id="IPR036925">
    <property type="entry name" value="TIF_IF2_dom3_sf"/>
</dbReference>
<dbReference type="InterPro" id="IPR009000">
    <property type="entry name" value="Transl_B-barrel_sf"/>
</dbReference>
<dbReference type="NCBIfam" id="TIGR00487">
    <property type="entry name" value="IF-2"/>
    <property type="match status" value="1"/>
</dbReference>
<dbReference type="NCBIfam" id="TIGR00231">
    <property type="entry name" value="small_GTP"/>
    <property type="match status" value="1"/>
</dbReference>
<dbReference type="PANTHER" id="PTHR43381:SF5">
    <property type="entry name" value="TR-TYPE G DOMAIN-CONTAINING PROTEIN"/>
    <property type="match status" value="1"/>
</dbReference>
<dbReference type="PANTHER" id="PTHR43381">
    <property type="entry name" value="TRANSLATION INITIATION FACTOR IF-2-RELATED"/>
    <property type="match status" value="1"/>
</dbReference>
<dbReference type="Pfam" id="PF22042">
    <property type="entry name" value="EF-G_D2"/>
    <property type="match status" value="1"/>
</dbReference>
<dbReference type="Pfam" id="PF00009">
    <property type="entry name" value="GTP_EFTU"/>
    <property type="match status" value="1"/>
</dbReference>
<dbReference type="Pfam" id="PF11987">
    <property type="entry name" value="IF-2"/>
    <property type="match status" value="1"/>
</dbReference>
<dbReference type="Pfam" id="PF04760">
    <property type="entry name" value="IF2_N"/>
    <property type="match status" value="2"/>
</dbReference>
<dbReference type="PRINTS" id="PR00315">
    <property type="entry name" value="ELONGATNFCT"/>
</dbReference>
<dbReference type="SUPFAM" id="SSF52156">
    <property type="entry name" value="Initiation factor IF2/eIF5b, domain 3"/>
    <property type="match status" value="1"/>
</dbReference>
<dbReference type="SUPFAM" id="SSF52540">
    <property type="entry name" value="P-loop containing nucleoside triphosphate hydrolases"/>
    <property type="match status" value="1"/>
</dbReference>
<dbReference type="SUPFAM" id="SSF50447">
    <property type="entry name" value="Translation proteins"/>
    <property type="match status" value="2"/>
</dbReference>
<dbReference type="PROSITE" id="PS51722">
    <property type="entry name" value="G_TR_2"/>
    <property type="match status" value="1"/>
</dbReference>
<dbReference type="PROSITE" id="PS01176">
    <property type="entry name" value="IF2"/>
    <property type="match status" value="1"/>
</dbReference>
<comment type="function">
    <text evidence="2">One of the essential components for the initiation of protein synthesis. Protects formylmethionyl-tRNA from spontaneous hydrolysis and promotes its binding to the 30S ribosomal subunits. Also involved in the hydrolysis of GTP during the formation of the 70S ribosomal complex.</text>
</comment>
<comment type="subcellular location">
    <subcellularLocation>
        <location evidence="2">Cytoplasm</location>
    </subcellularLocation>
</comment>
<comment type="similarity">
    <text evidence="2">Belongs to the TRAFAC class translation factor GTPase superfamily. Classic translation factor GTPase family. IF-2 subfamily.</text>
</comment>
<protein>
    <recommendedName>
        <fullName evidence="2">Translation initiation factor IF-2</fullName>
    </recommendedName>
</protein>
<name>IF2_PROM0</name>
<evidence type="ECO:0000250" key="1"/>
<evidence type="ECO:0000255" key="2">
    <source>
        <dbReference type="HAMAP-Rule" id="MF_00100"/>
    </source>
</evidence>
<evidence type="ECO:0000256" key="3">
    <source>
        <dbReference type="SAM" id="MobiDB-lite"/>
    </source>
</evidence>
<reference key="1">
    <citation type="journal article" date="2007" name="PLoS Genet.">
        <title>Patterns and implications of gene gain and loss in the evolution of Prochlorococcus.</title>
        <authorList>
            <person name="Kettler G.C."/>
            <person name="Martiny A.C."/>
            <person name="Huang K."/>
            <person name="Zucker J."/>
            <person name="Coleman M.L."/>
            <person name="Rodrigue S."/>
            <person name="Chen F."/>
            <person name="Lapidus A."/>
            <person name="Ferriera S."/>
            <person name="Johnson J."/>
            <person name="Steglich C."/>
            <person name="Church G.M."/>
            <person name="Richardson P."/>
            <person name="Chisholm S.W."/>
        </authorList>
    </citation>
    <scope>NUCLEOTIDE SEQUENCE [LARGE SCALE GENOMIC DNA]</scope>
    <source>
        <strain>MIT 9301</strain>
    </source>
</reference>
<accession>A3PEY3</accession>